<accession>Q9FZ57</accession>
<accession>F4I627</accession>
<comment type="catalytic activity">
    <reaction>
        <text>D-glucose 6-phosphate + UDP-alpha-D-glucose = alpha,alpha-trehalose 6-phosphate + UDP + H(+)</text>
        <dbReference type="Rhea" id="RHEA:18889"/>
        <dbReference type="ChEBI" id="CHEBI:15378"/>
        <dbReference type="ChEBI" id="CHEBI:58223"/>
        <dbReference type="ChEBI" id="CHEBI:58429"/>
        <dbReference type="ChEBI" id="CHEBI:58885"/>
        <dbReference type="ChEBI" id="CHEBI:61548"/>
        <dbReference type="EC" id="2.4.1.15"/>
    </reaction>
</comment>
<comment type="similarity">
    <text evidence="1">In the N-terminal section; belongs to the glycosyltransferase 20 family.</text>
</comment>
<comment type="similarity">
    <text evidence="1">In the C-terminal section; belongs to the trehalose phosphatase family.</text>
</comment>
<evidence type="ECO:0000305" key="1"/>
<protein>
    <recommendedName>
        <fullName>Probable alpha,alpha-trehalose-phosphate synthase [UDP-forming] 2</fullName>
        <ecNumber>2.4.1.15</ecNumber>
    </recommendedName>
    <alternativeName>
        <fullName>Trehalose-6-phosphate synthase 2</fullName>
        <shortName>AtTPS2</shortName>
    </alternativeName>
</protein>
<dbReference type="EC" id="2.4.1.15"/>
<dbReference type="EMBL" id="AC051629">
    <property type="protein sequence ID" value="AAF99834.1"/>
    <property type="molecule type" value="Genomic_DNA"/>
</dbReference>
<dbReference type="EMBL" id="CP002684">
    <property type="protein sequence ID" value="AEE29528.2"/>
    <property type="molecule type" value="Genomic_DNA"/>
</dbReference>
<dbReference type="PIR" id="E86305">
    <property type="entry name" value="E86305"/>
</dbReference>
<dbReference type="RefSeq" id="NP_173142.2">
    <property type="nucleotide sequence ID" value="NM_101559.2"/>
</dbReference>
<dbReference type="SMR" id="Q9FZ57"/>
<dbReference type="FunCoup" id="Q9FZ57">
    <property type="interactions" value="872"/>
</dbReference>
<dbReference type="STRING" id="3702.Q9FZ57"/>
<dbReference type="CAZy" id="GT20">
    <property type="family name" value="Glycosyltransferase Family 20"/>
</dbReference>
<dbReference type="PaxDb" id="3702-AT1G16980.1"/>
<dbReference type="ProteomicsDB" id="228332"/>
<dbReference type="EnsemblPlants" id="AT1G16980.1">
    <property type="protein sequence ID" value="AT1G16980.1"/>
    <property type="gene ID" value="AT1G16980"/>
</dbReference>
<dbReference type="GeneID" id="838269"/>
<dbReference type="Gramene" id="AT1G16980.1">
    <property type="protein sequence ID" value="AT1G16980.1"/>
    <property type="gene ID" value="AT1G16980"/>
</dbReference>
<dbReference type="KEGG" id="ath:AT1G16980"/>
<dbReference type="Araport" id="AT1G16980"/>
<dbReference type="TAIR" id="AT1G16980">
    <property type="gene designation" value="TPS2"/>
</dbReference>
<dbReference type="eggNOG" id="KOG1050">
    <property type="taxonomic scope" value="Eukaryota"/>
</dbReference>
<dbReference type="HOGENOM" id="CLU_002351_0_1_1"/>
<dbReference type="InParanoid" id="Q9FZ57"/>
<dbReference type="PhylomeDB" id="Q9FZ57"/>
<dbReference type="PRO" id="PR:Q9FZ57"/>
<dbReference type="Proteomes" id="UP000006548">
    <property type="component" value="Chromosome 1"/>
</dbReference>
<dbReference type="ExpressionAtlas" id="Q9FZ57">
    <property type="expression patterns" value="baseline and differential"/>
</dbReference>
<dbReference type="GO" id="GO:0003825">
    <property type="term" value="F:alpha,alpha-trehalose-phosphate synthase (UDP-forming) activity"/>
    <property type="evidence" value="ECO:0007669"/>
    <property type="project" value="UniProtKB-EC"/>
</dbReference>
<dbReference type="GO" id="GO:0005992">
    <property type="term" value="P:trehalose biosynthetic process"/>
    <property type="evidence" value="ECO:0007669"/>
    <property type="project" value="InterPro"/>
</dbReference>
<dbReference type="CDD" id="cd03788">
    <property type="entry name" value="GT20_TPS"/>
    <property type="match status" value="1"/>
</dbReference>
<dbReference type="CDD" id="cd01627">
    <property type="entry name" value="HAD_TPP"/>
    <property type="match status" value="1"/>
</dbReference>
<dbReference type="FunFam" id="3.40.50.1000:FF:000100">
    <property type="entry name" value="Alpha,alpha-trehalose-phosphate synthase"/>
    <property type="match status" value="1"/>
</dbReference>
<dbReference type="FunFam" id="3.40.50.2000:FF:000046">
    <property type="entry name" value="alpha,alpha-trehalose-phosphate synthase [UDP-forming] 1"/>
    <property type="match status" value="1"/>
</dbReference>
<dbReference type="FunFam" id="3.40.50.2000:FF:000039">
    <property type="entry name" value="alpha,alpha-trehalose-phosphate synthase [UDP-forming] 1-like"/>
    <property type="match status" value="1"/>
</dbReference>
<dbReference type="Gene3D" id="3.40.50.2000">
    <property type="entry name" value="Glycogen Phosphorylase B"/>
    <property type="match status" value="2"/>
</dbReference>
<dbReference type="Gene3D" id="3.40.50.1000">
    <property type="entry name" value="HAD superfamily/HAD-like"/>
    <property type="match status" value="1"/>
</dbReference>
<dbReference type="Gene3D" id="3.30.70.1020">
    <property type="entry name" value="Trehalose-6-phosphate phosphatase related protein, domain 2"/>
    <property type="match status" value="1"/>
</dbReference>
<dbReference type="InterPro" id="IPR001830">
    <property type="entry name" value="Glyco_trans_20"/>
</dbReference>
<dbReference type="InterPro" id="IPR036412">
    <property type="entry name" value="HAD-like_sf"/>
</dbReference>
<dbReference type="InterPro" id="IPR023214">
    <property type="entry name" value="HAD_sf"/>
</dbReference>
<dbReference type="InterPro" id="IPR012766">
    <property type="entry name" value="Trehalose_OtsA"/>
</dbReference>
<dbReference type="InterPro" id="IPR003337">
    <property type="entry name" value="Trehalose_PPase"/>
</dbReference>
<dbReference type="NCBIfam" id="NF011071">
    <property type="entry name" value="PRK14501.1"/>
    <property type="match status" value="1"/>
</dbReference>
<dbReference type="NCBIfam" id="TIGR02400">
    <property type="entry name" value="trehalose_OtsA"/>
    <property type="match status" value="1"/>
</dbReference>
<dbReference type="PANTHER" id="PTHR10788:SF90">
    <property type="entry name" value="ALPHA,ALPHA-TREHALOSE-PHOSPHATE SYNTHASE [UDP-FORMING] 2-RELATED"/>
    <property type="match status" value="1"/>
</dbReference>
<dbReference type="PANTHER" id="PTHR10788">
    <property type="entry name" value="TREHALOSE-6-PHOSPHATE SYNTHASE"/>
    <property type="match status" value="1"/>
</dbReference>
<dbReference type="Pfam" id="PF00982">
    <property type="entry name" value="Glyco_transf_20"/>
    <property type="match status" value="1"/>
</dbReference>
<dbReference type="Pfam" id="PF02358">
    <property type="entry name" value="Trehalose_PPase"/>
    <property type="match status" value="1"/>
</dbReference>
<dbReference type="SUPFAM" id="SSF56784">
    <property type="entry name" value="HAD-like"/>
    <property type="match status" value="1"/>
</dbReference>
<dbReference type="SUPFAM" id="SSF53756">
    <property type="entry name" value="UDP-Glycosyltransferase/glycogen phosphorylase"/>
    <property type="match status" value="1"/>
</dbReference>
<gene>
    <name type="primary">TPS2</name>
    <name type="ordered locus">At1g16980</name>
    <name type="ORF">F6I1.1</name>
</gene>
<organism>
    <name type="scientific">Arabidopsis thaliana</name>
    <name type="common">Mouse-ear cress</name>
    <dbReference type="NCBI Taxonomy" id="3702"/>
    <lineage>
        <taxon>Eukaryota</taxon>
        <taxon>Viridiplantae</taxon>
        <taxon>Streptophyta</taxon>
        <taxon>Embryophyta</taxon>
        <taxon>Tracheophyta</taxon>
        <taxon>Spermatophyta</taxon>
        <taxon>Magnoliopsida</taxon>
        <taxon>eudicotyledons</taxon>
        <taxon>Gunneridae</taxon>
        <taxon>Pentapetalae</taxon>
        <taxon>rosids</taxon>
        <taxon>malvids</taxon>
        <taxon>Brassicales</taxon>
        <taxon>Brassicaceae</taxon>
        <taxon>Camelineae</taxon>
        <taxon>Arabidopsis</taxon>
    </lineage>
</organism>
<feature type="chain" id="PRO_0000324823" description="Probable alpha,alpha-trehalose-phosphate synthase [UDP-forming] 2">
    <location>
        <begin position="1"/>
        <end position="822"/>
    </location>
</feature>
<feature type="region of interest" description="Glycosyltransferase">
    <location>
        <begin position="12"/>
        <end position="479"/>
    </location>
</feature>
<sequence length="822" mass="93005">MMDYDDARGERPRLLVVANRLPVSAKRTGENSWSLEMSPGGLVSGLLGITSQFDTKWVGWPGVDVHDEIEKNALTESLAEMKCIPVFLNGVFDQYYNGYCNGILWPILHHMGLPQEDQHDTNQTFETQYDAYKKANRMFLDVIIDNYEEGDIVWCHDYHLMFLPQYLKEYNNKIKVGWFLHSPFPSSEVYKTLPSRSELLRAILAADLLGFHTYDFARHFLSTCTRILGVEGTHEGVVYQGRVTRVAVFPIGIDPDRFIRTCKLPEVTQQMNELQEKFAGKKVILGVDRLDMIKGIPQKYLAFEKFLEENPYWRDKVVLVQIAVPTRNDVPEYRKLKSQVHGLVGRINGRFGSVSSLPIHHLDCSVDFNYLCAIYAIADVMLVTSLRDGMNLVSYEFVACQEAKKGVLVLSEFAGAGQSLGVGALIVNPWDVTEVSSAIKEALNMPAEERETRHRSNFQYVCTHSAEKWGLDFMSELNGIIPESEMQMRKIPLQLPEQDVIQQYSQSNNRLIILGFFGTLAEPMNSGTKEMDLKLNPELKGTLKALCNDPKTTVVVLSRSGKNILNKNFGESNIWLAAENGMFEKQTTGEWVTNMPQNVNLDWVDGVKNVFKYFTDRTPRSYFEASETSLVWNYEYADVEFGRAQARDLLQYLWAGPISNASVDVVRGNHSVEVHAIGETKGAAIGRILGEIVHRKSMTTPIDFVFCSGYFLEKDEDIYTFFESKILSSKSPNGLDLKKENYFSAAIGQARTKARYVIDSAHGVVDLLHKLAVVADTTMTDSFSDSEIYEPRDANANENSKRWINSVRRRKVEIGDTGQIGM</sequence>
<keyword id="KW-0328">Glycosyltransferase</keyword>
<keyword id="KW-1185">Reference proteome</keyword>
<keyword id="KW-0808">Transferase</keyword>
<reference key="1">
    <citation type="journal article" date="2000" name="Nature">
        <title>Sequence and analysis of chromosome 1 of the plant Arabidopsis thaliana.</title>
        <authorList>
            <person name="Theologis A."/>
            <person name="Ecker J.R."/>
            <person name="Palm C.J."/>
            <person name="Federspiel N.A."/>
            <person name="Kaul S."/>
            <person name="White O."/>
            <person name="Alonso J."/>
            <person name="Altafi H."/>
            <person name="Araujo R."/>
            <person name="Bowman C.L."/>
            <person name="Brooks S.Y."/>
            <person name="Buehler E."/>
            <person name="Chan A."/>
            <person name="Chao Q."/>
            <person name="Chen H."/>
            <person name="Cheuk R.F."/>
            <person name="Chin C.W."/>
            <person name="Chung M.K."/>
            <person name="Conn L."/>
            <person name="Conway A.B."/>
            <person name="Conway A.R."/>
            <person name="Creasy T.H."/>
            <person name="Dewar K."/>
            <person name="Dunn P."/>
            <person name="Etgu P."/>
            <person name="Feldblyum T.V."/>
            <person name="Feng J.-D."/>
            <person name="Fong B."/>
            <person name="Fujii C.Y."/>
            <person name="Gill J.E."/>
            <person name="Goldsmith A.D."/>
            <person name="Haas B."/>
            <person name="Hansen N.F."/>
            <person name="Hughes B."/>
            <person name="Huizar L."/>
            <person name="Hunter J.L."/>
            <person name="Jenkins J."/>
            <person name="Johnson-Hopson C."/>
            <person name="Khan S."/>
            <person name="Khaykin E."/>
            <person name="Kim C.J."/>
            <person name="Koo H.L."/>
            <person name="Kremenetskaia I."/>
            <person name="Kurtz D.B."/>
            <person name="Kwan A."/>
            <person name="Lam B."/>
            <person name="Langin-Hooper S."/>
            <person name="Lee A."/>
            <person name="Lee J.M."/>
            <person name="Lenz C.A."/>
            <person name="Li J.H."/>
            <person name="Li Y.-P."/>
            <person name="Lin X."/>
            <person name="Liu S.X."/>
            <person name="Liu Z.A."/>
            <person name="Luros J.S."/>
            <person name="Maiti R."/>
            <person name="Marziali A."/>
            <person name="Militscher J."/>
            <person name="Miranda M."/>
            <person name="Nguyen M."/>
            <person name="Nierman W.C."/>
            <person name="Osborne B.I."/>
            <person name="Pai G."/>
            <person name="Peterson J."/>
            <person name="Pham P.K."/>
            <person name="Rizzo M."/>
            <person name="Rooney T."/>
            <person name="Rowley D."/>
            <person name="Sakano H."/>
            <person name="Salzberg S.L."/>
            <person name="Schwartz J.R."/>
            <person name="Shinn P."/>
            <person name="Southwick A.M."/>
            <person name="Sun H."/>
            <person name="Tallon L.J."/>
            <person name="Tambunga G."/>
            <person name="Toriumi M.J."/>
            <person name="Town C.D."/>
            <person name="Utterback T."/>
            <person name="Van Aken S."/>
            <person name="Vaysberg M."/>
            <person name="Vysotskaia V.S."/>
            <person name="Walker M."/>
            <person name="Wu D."/>
            <person name="Yu G."/>
            <person name="Fraser C.M."/>
            <person name="Venter J.C."/>
            <person name="Davis R.W."/>
        </authorList>
    </citation>
    <scope>NUCLEOTIDE SEQUENCE [LARGE SCALE GENOMIC DNA]</scope>
    <source>
        <strain>cv. Columbia</strain>
    </source>
</reference>
<reference key="2">
    <citation type="journal article" date="2017" name="Plant J.">
        <title>Araport11: a complete reannotation of the Arabidopsis thaliana reference genome.</title>
        <authorList>
            <person name="Cheng C.Y."/>
            <person name="Krishnakumar V."/>
            <person name="Chan A.P."/>
            <person name="Thibaud-Nissen F."/>
            <person name="Schobel S."/>
            <person name="Town C.D."/>
        </authorList>
    </citation>
    <scope>GENOME REANNOTATION</scope>
    <source>
        <strain>cv. Columbia</strain>
    </source>
</reference>
<reference key="3">
    <citation type="journal article" date="2001" name="Trends Plant Sci.">
        <title>An unexpected plethora of trehalose biosynthesis genes in Arabidopsis thaliana.</title>
        <authorList>
            <person name="Leyman B."/>
            <person name="Van Dijck P."/>
            <person name="Thevelein J.M."/>
        </authorList>
    </citation>
    <scope>GENE FAMILY</scope>
    <scope>NOMENCLATURE</scope>
</reference>
<name>TPS2_ARATH</name>
<proteinExistence type="inferred from homology"/>